<protein>
    <recommendedName>
        <fullName evidence="1">Large ribosomal subunit protein uL3</fullName>
    </recommendedName>
    <alternativeName>
        <fullName evidence="3">50S ribosomal protein L3</fullName>
    </alternativeName>
</protein>
<feature type="chain" id="PRO_1000165899" description="Large ribosomal subunit protein uL3">
    <location>
        <begin position="1"/>
        <end position="219"/>
    </location>
</feature>
<feature type="region of interest" description="Disordered" evidence="2">
    <location>
        <begin position="124"/>
        <end position="154"/>
    </location>
</feature>
<gene>
    <name evidence="1" type="primary">rplC</name>
    <name type="ordered locus">ATP_00341</name>
</gene>
<proteinExistence type="inferred from homology"/>
<dbReference type="EMBL" id="CU469464">
    <property type="protein sequence ID" value="CAP18528.1"/>
    <property type="molecule type" value="Genomic_DNA"/>
</dbReference>
<dbReference type="SMR" id="B3QZZ1"/>
<dbReference type="STRING" id="37692.ATP_00341"/>
<dbReference type="KEGG" id="pml:ATP_00341"/>
<dbReference type="eggNOG" id="COG0087">
    <property type="taxonomic scope" value="Bacteria"/>
</dbReference>
<dbReference type="HOGENOM" id="CLU_044142_4_1_14"/>
<dbReference type="Proteomes" id="UP000002020">
    <property type="component" value="Chromosome"/>
</dbReference>
<dbReference type="GO" id="GO:0022625">
    <property type="term" value="C:cytosolic large ribosomal subunit"/>
    <property type="evidence" value="ECO:0007669"/>
    <property type="project" value="TreeGrafter"/>
</dbReference>
<dbReference type="GO" id="GO:0019843">
    <property type="term" value="F:rRNA binding"/>
    <property type="evidence" value="ECO:0007669"/>
    <property type="project" value="UniProtKB-UniRule"/>
</dbReference>
<dbReference type="GO" id="GO:0003735">
    <property type="term" value="F:structural constituent of ribosome"/>
    <property type="evidence" value="ECO:0007669"/>
    <property type="project" value="InterPro"/>
</dbReference>
<dbReference type="GO" id="GO:0006412">
    <property type="term" value="P:translation"/>
    <property type="evidence" value="ECO:0007669"/>
    <property type="project" value="UniProtKB-UniRule"/>
</dbReference>
<dbReference type="FunFam" id="2.40.30.10:FF:000004">
    <property type="entry name" value="50S ribosomal protein L3"/>
    <property type="match status" value="1"/>
</dbReference>
<dbReference type="Gene3D" id="3.30.160.810">
    <property type="match status" value="1"/>
</dbReference>
<dbReference type="Gene3D" id="2.40.30.10">
    <property type="entry name" value="Translation factors"/>
    <property type="match status" value="1"/>
</dbReference>
<dbReference type="HAMAP" id="MF_01325_B">
    <property type="entry name" value="Ribosomal_uL3_B"/>
    <property type="match status" value="1"/>
</dbReference>
<dbReference type="InterPro" id="IPR000597">
    <property type="entry name" value="Ribosomal_uL3"/>
</dbReference>
<dbReference type="InterPro" id="IPR019927">
    <property type="entry name" value="Ribosomal_uL3_bac/org-type"/>
</dbReference>
<dbReference type="InterPro" id="IPR019926">
    <property type="entry name" value="Ribosomal_uL3_CS"/>
</dbReference>
<dbReference type="InterPro" id="IPR009000">
    <property type="entry name" value="Transl_B-barrel_sf"/>
</dbReference>
<dbReference type="NCBIfam" id="TIGR03625">
    <property type="entry name" value="L3_bact"/>
    <property type="match status" value="1"/>
</dbReference>
<dbReference type="PANTHER" id="PTHR11229">
    <property type="entry name" value="50S RIBOSOMAL PROTEIN L3"/>
    <property type="match status" value="1"/>
</dbReference>
<dbReference type="PANTHER" id="PTHR11229:SF16">
    <property type="entry name" value="LARGE RIBOSOMAL SUBUNIT PROTEIN UL3C"/>
    <property type="match status" value="1"/>
</dbReference>
<dbReference type="Pfam" id="PF00297">
    <property type="entry name" value="Ribosomal_L3"/>
    <property type="match status" value="1"/>
</dbReference>
<dbReference type="SUPFAM" id="SSF50447">
    <property type="entry name" value="Translation proteins"/>
    <property type="match status" value="1"/>
</dbReference>
<dbReference type="PROSITE" id="PS00474">
    <property type="entry name" value="RIBOSOMAL_L3"/>
    <property type="match status" value="1"/>
</dbReference>
<sequence>MAKGILGRKIGMTQVFDEKGSLIPITIVDVSDNVILQQNSVEKNGYLSTQLGFSSKREKLSTKPALGHFKNAKTSPKRFIKEIRFLPGIKNELSELDLGTSLKTNLFQPGDIVDVIGISKGKGFSGSIKRHNQSEGPKSHGSRYHRRPGSMGPIKGKIKGKKLPGQMGHQTVTLQNLKINSIDHEQELFLIKGSIPGPRKGFVMIKTAIKTVIKENQDA</sequence>
<evidence type="ECO:0000255" key="1">
    <source>
        <dbReference type="HAMAP-Rule" id="MF_01325"/>
    </source>
</evidence>
<evidence type="ECO:0000256" key="2">
    <source>
        <dbReference type="SAM" id="MobiDB-lite"/>
    </source>
</evidence>
<evidence type="ECO:0000305" key="3"/>
<comment type="function">
    <text evidence="1">One of the primary rRNA binding proteins, it binds directly near the 3'-end of the 23S rRNA, where it nucleates assembly of the 50S subunit.</text>
</comment>
<comment type="subunit">
    <text evidence="1">Part of the 50S ribosomal subunit. Forms a cluster with proteins L14 and L19.</text>
</comment>
<comment type="similarity">
    <text evidence="1">Belongs to the universal ribosomal protein uL3 family.</text>
</comment>
<accession>B3QZZ1</accession>
<reference key="1">
    <citation type="journal article" date="2008" name="BMC Genomics">
        <title>The linear chromosome of the plant-pathogenic mycoplasma 'Candidatus Phytoplasma mali'.</title>
        <authorList>
            <person name="Kube M."/>
            <person name="Schneider B."/>
            <person name="Kuhl H."/>
            <person name="Dandekar T."/>
            <person name="Heitmann K."/>
            <person name="Migdoll A.M."/>
            <person name="Reinhardt R."/>
            <person name="Seemueller E."/>
        </authorList>
    </citation>
    <scope>NUCLEOTIDE SEQUENCE [LARGE SCALE GENOMIC DNA]</scope>
    <source>
        <strain>AT</strain>
    </source>
</reference>
<keyword id="KW-1185">Reference proteome</keyword>
<keyword id="KW-0687">Ribonucleoprotein</keyword>
<keyword id="KW-0689">Ribosomal protein</keyword>
<keyword id="KW-0694">RNA-binding</keyword>
<keyword id="KW-0699">rRNA-binding</keyword>
<name>RL3_PHYMT</name>
<organism>
    <name type="scientific">Phytoplasma mali (strain AT)</name>
    <dbReference type="NCBI Taxonomy" id="482235"/>
    <lineage>
        <taxon>Bacteria</taxon>
        <taxon>Bacillati</taxon>
        <taxon>Mycoplasmatota</taxon>
        <taxon>Mollicutes</taxon>
        <taxon>Acholeplasmatales</taxon>
        <taxon>Acholeplasmataceae</taxon>
        <taxon>Candidatus Phytoplasma</taxon>
        <taxon>16SrX (Apple proliferation group)</taxon>
    </lineage>
</organism>